<sequence>MKAKLAEVVEIFTDGACKGNPGVGGWGALLQYNGHRRELFGGEKMTTNNRMELLAVIRALEALTKPCEVRLHTDSLYVQKGISEWIHAWKKRDWRTADKKPVKNDDLWRELDLLTQRHKIEWLWVRGHSGHDGNEYADMLANRGVQTALRGVSAN</sequence>
<feature type="chain" id="PRO_0000332637" description="Ribonuclease H">
    <location>
        <begin position="1"/>
        <end position="155"/>
    </location>
</feature>
<feature type="domain" description="RNase H type-1" evidence="2">
    <location>
        <begin position="5"/>
        <end position="146"/>
    </location>
</feature>
<feature type="binding site" evidence="1">
    <location>
        <position position="14"/>
    </location>
    <ligand>
        <name>Mg(2+)</name>
        <dbReference type="ChEBI" id="CHEBI:18420"/>
        <label>1</label>
    </ligand>
</feature>
<feature type="binding site" evidence="1">
    <location>
        <position position="14"/>
    </location>
    <ligand>
        <name>Mg(2+)</name>
        <dbReference type="ChEBI" id="CHEBI:18420"/>
        <label>2</label>
    </ligand>
</feature>
<feature type="binding site" evidence="1">
    <location>
        <position position="52"/>
    </location>
    <ligand>
        <name>Mg(2+)</name>
        <dbReference type="ChEBI" id="CHEBI:18420"/>
        <label>1</label>
    </ligand>
</feature>
<feature type="binding site" evidence="1">
    <location>
        <position position="74"/>
    </location>
    <ligand>
        <name>Mg(2+)</name>
        <dbReference type="ChEBI" id="CHEBI:18420"/>
        <label>1</label>
    </ligand>
</feature>
<feature type="binding site" evidence="1">
    <location>
        <position position="138"/>
    </location>
    <ligand>
        <name>Mg(2+)</name>
        <dbReference type="ChEBI" id="CHEBI:18420"/>
        <label>2</label>
    </ligand>
</feature>
<protein>
    <recommendedName>
        <fullName evidence="1">Ribonuclease H</fullName>
        <shortName evidence="1">RNase H</shortName>
        <ecNumber evidence="1">3.1.26.4</ecNumber>
    </recommendedName>
</protein>
<name>RNH_NITMU</name>
<proteinExistence type="inferred from homology"/>
<gene>
    <name evidence="1" type="primary">rnhA</name>
    <name type="ordered locus">Nmul_A1619</name>
</gene>
<dbReference type="EC" id="3.1.26.4" evidence="1"/>
<dbReference type="EMBL" id="CP000103">
    <property type="protein sequence ID" value="ABB74920.1"/>
    <property type="molecule type" value="Genomic_DNA"/>
</dbReference>
<dbReference type="RefSeq" id="WP_011380947.1">
    <property type="nucleotide sequence ID" value="NC_007614.1"/>
</dbReference>
<dbReference type="SMR" id="Q2Y8K1"/>
<dbReference type="STRING" id="323848.Nmul_A1619"/>
<dbReference type="KEGG" id="nmu:Nmul_A1619"/>
<dbReference type="eggNOG" id="COG0328">
    <property type="taxonomic scope" value="Bacteria"/>
</dbReference>
<dbReference type="HOGENOM" id="CLU_030894_6_0_4"/>
<dbReference type="OrthoDB" id="7845843at2"/>
<dbReference type="Proteomes" id="UP000002718">
    <property type="component" value="Chromosome"/>
</dbReference>
<dbReference type="GO" id="GO:0005737">
    <property type="term" value="C:cytoplasm"/>
    <property type="evidence" value="ECO:0007669"/>
    <property type="project" value="UniProtKB-SubCell"/>
</dbReference>
<dbReference type="GO" id="GO:0000287">
    <property type="term" value="F:magnesium ion binding"/>
    <property type="evidence" value="ECO:0007669"/>
    <property type="project" value="UniProtKB-UniRule"/>
</dbReference>
<dbReference type="GO" id="GO:0003676">
    <property type="term" value="F:nucleic acid binding"/>
    <property type="evidence" value="ECO:0007669"/>
    <property type="project" value="InterPro"/>
</dbReference>
<dbReference type="GO" id="GO:0004523">
    <property type="term" value="F:RNA-DNA hybrid ribonuclease activity"/>
    <property type="evidence" value="ECO:0007669"/>
    <property type="project" value="UniProtKB-UniRule"/>
</dbReference>
<dbReference type="GO" id="GO:0043137">
    <property type="term" value="P:DNA replication, removal of RNA primer"/>
    <property type="evidence" value="ECO:0007669"/>
    <property type="project" value="TreeGrafter"/>
</dbReference>
<dbReference type="CDD" id="cd09278">
    <property type="entry name" value="RNase_HI_prokaryote_like"/>
    <property type="match status" value="1"/>
</dbReference>
<dbReference type="FunFam" id="3.30.420.10:FF:000089">
    <property type="entry name" value="Ribonuclease H"/>
    <property type="match status" value="1"/>
</dbReference>
<dbReference type="Gene3D" id="3.30.420.10">
    <property type="entry name" value="Ribonuclease H-like superfamily/Ribonuclease H"/>
    <property type="match status" value="1"/>
</dbReference>
<dbReference type="HAMAP" id="MF_00042">
    <property type="entry name" value="RNase_H"/>
    <property type="match status" value="1"/>
</dbReference>
<dbReference type="InterPro" id="IPR050092">
    <property type="entry name" value="RNase_H"/>
</dbReference>
<dbReference type="InterPro" id="IPR012337">
    <property type="entry name" value="RNaseH-like_sf"/>
</dbReference>
<dbReference type="InterPro" id="IPR002156">
    <property type="entry name" value="RNaseH_domain"/>
</dbReference>
<dbReference type="InterPro" id="IPR036397">
    <property type="entry name" value="RNaseH_sf"/>
</dbReference>
<dbReference type="InterPro" id="IPR022892">
    <property type="entry name" value="RNaseHI"/>
</dbReference>
<dbReference type="NCBIfam" id="NF001236">
    <property type="entry name" value="PRK00203.1"/>
    <property type="match status" value="1"/>
</dbReference>
<dbReference type="PANTHER" id="PTHR10642">
    <property type="entry name" value="RIBONUCLEASE H1"/>
    <property type="match status" value="1"/>
</dbReference>
<dbReference type="PANTHER" id="PTHR10642:SF26">
    <property type="entry name" value="RIBONUCLEASE H1"/>
    <property type="match status" value="1"/>
</dbReference>
<dbReference type="Pfam" id="PF00075">
    <property type="entry name" value="RNase_H"/>
    <property type="match status" value="1"/>
</dbReference>
<dbReference type="SUPFAM" id="SSF53098">
    <property type="entry name" value="Ribonuclease H-like"/>
    <property type="match status" value="1"/>
</dbReference>
<dbReference type="PROSITE" id="PS50879">
    <property type="entry name" value="RNASE_H_1"/>
    <property type="match status" value="1"/>
</dbReference>
<accession>Q2Y8K1</accession>
<evidence type="ECO:0000255" key="1">
    <source>
        <dbReference type="HAMAP-Rule" id="MF_00042"/>
    </source>
</evidence>
<evidence type="ECO:0000255" key="2">
    <source>
        <dbReference type="PROSITE-ProRule" id="PRU00408"/>
    </source>
</evidence>
<keyword id="KW-0963">Cytoplasm</keyword>
<keyword id="KW-0255">Endonuclease</keyword>
<keyword id="KW-0378">Hydrolase</keyword>
<keyword id="KW-0460">Magnesium</keyword>
<keyword id="KW-0479">Metal-binding</keyword>
<keyword id="KW-0540">Nuclease</keyword>
<keyword id="KW-1185">Reference proteome</keyword>
<organism>
    <name type="scientific">Nitrosospira multiformis (strain ATCC 25196 / NCIMB 11849 / C 71)</name>
    <dbReference type="NCBI Taxonomy" id="323848"/>
    <lineage>
        <taxon>Bacteria</taxon>
        <taxon>Pseudomonadati</taxon>
        <taxon>Pseudomonadota</taxon>
        <taxon>Betaproteobacteria</taxon>
        <taxon>Nitrosomonadales</taxon>
        <taxon>Nitrosomonadaceae</taxon>
        <taxon>Nitrosospira</taxon>
    </lineage>
</organism>
<comment type="function">
    <text evidence="1">Endonuclease that specifically degrades the RNA of RNA-DNA hybrids.</text>
</comment>
<comment type="catalytic activity">
    <reaction evidence="1">
        <text>Endonucleolytic cleavage to 5'-phosphomonoester.</text>
        <dbReference type="EC" id="3.1.26.4"/>
    </reaction>
</comment>
<comment type="cofactor">
    <cofactor evidence="1">
        <name>Mg(2+)</name>
        <dbReference type="ChEBI" id="CHEBI:18420"/>
    </cofactor>
    <text evidence="1">Binds 1 Mg(2+) ion per subunit. May bind a second metal ion at a regulatory site, or after substrate binding.</text>
</comment>
<comment type="subunit">
    <text evidence="1">Monomer.</text>
</comment>
<comment type="subcellular location">
    <subcellularLocation>
        <location evidence="1">Cytoplasm</location>
    </subcellularLocation>
</comment>
<comment type="similarity">
    <text evidence="1">Belongs to the RNase H family.</text>
</comment>
<reference key="1">
    <citation type="submission" date="2005-08" db="EMBL/GenBank/DDBJ databases">
        <title>Complete sequence of chromosome 1 of Nitrosospira multiformis ATCC 25196.</title>
        <authorList>
            <person name="Copeland A."/>
            <person name="Lucas S."/>
            <person name="Lapidus A."/>
            <person name="Barry K."/>
            <person name="Detter J.C."/>
            <person name="Glavina T."/>
            <person name="Hammon N."/>
            <person name="Israni S."/>
            <person name="Pitluck S."/>
            <person name="Chain P."/>
            <person name="Malfatti S."/>
            <person name="Shin M."/>
            <person name="Vergez L."/>
            <person name="Schmutz J."/>
            <person name="Larimer F."/>
            <person name="Land M."/>
            <person name="Hauser L."/>
            <person name="Kyrpides N."/>
            <person name="Lykidis A."/>
            <person name="Richardson P."/>
        </authorList>
    </citation>
    <scope>NUCLEOTIDE SEQUENCE [LARGE SCALE GENOMIC DNA]</scope>
    <source>
        <strain>ATCC 25196 / NCIMB 11849 / C 71</strain>
    </source>
</reference>